<name>MMP23_RAT</name>
<evidence type="ECO:0000250" key="1"/>
<evidence type="ECO:0000255" key="2"/>
<evidence type="ECO:0000255" key="3">
    <source>
        <dbReference type="PROSITE-ProRule" id="PRU01005"/>
    </source>
</evidence>
<evidence type="ECO:0000255" key="4">
    <source>
        <dbReference type="PROSITE-ProRule" id="PRU10095"/>
    </source>
</evidence>
<evidence type="ECO:0000269" key="5">
    <source>
    </source>
</evidence>
<evidence type="ECO:0000269" key="6">
    <source>
    </source>
</evidence>
<evidence type="ECO:0000305" key="7"/>
<evidence type="ECO:0007829" key="8">
    <source>
        <dbReference type="PDB" id="2K72"/>
    </source>
</evidence>
<protein>
    <recommendedName>
        <fullName>Matrix metalloproteinase-23</fullName>
        <shortName>MMP-23</shortName>
        <ecNumber>3.4.24.-</ecNumber>
    </recommendedName>
    <alternativeName>
        <fullName>metalloprotease in the female reproductive tract</fullName>
        <shortName>MIFR</shortName>
    </alternativeName>
    <component>
        <recommendedName>
            <fullName>Matrix metalloproteinase-23, soluble form</fullName>
        </recommendedName>
    </component>
</protein>
<sequence>MGWRACLRPEASGAVQGRWLGAVLSGLCLLSALAFLEWLGSPTETAWNAAQGNVDAPDVGGSTPQVPSLLSMLVTRRRRYTLTPARLRWDHFNLTYRILSFPRNLLSPEETRRGLAAAFRMWSDVSPFSFREVAPERPSDLKIGFYPVNHTDCLVSALHHCFDGPTGELAHAFFPPHGGIHFDDSEYWVLGPTRYSWKKGVWLTDLVHVAAHEIGHALGLMHSQQDQALMHLNATLRGWKALSQDELWGLHRLYGCLDRIFVCTSWARKGFCDVRQRLMKRLCPRSCDFCYEFPFPTVATTTSPTRTKTRFVREGRNMTFHCGQKILHKKGKVYWYKDQEPLEFSYPGYLALGEARLSIIANAVNEGTYTCVVRHRQRVLTTYSWRVRVRS</sequence>
<feature type="chain" id="PRO_0000259918" description="Matrix metalloproteinase-23">
    <location>
        <begin position="1"/>
        <end position="391"/>
    </location>
</feature>
<feature type="propeptide" id="PRO_0000259919" evidence="2">
    <location>
        <begin position="1"/>
        <end position="79"/>
    </location>
</feature>
<feature type="chain" id="PRO_0000259920" description="Matrix metalloproteinase-23, soluble form">
    <location>
        <begin position="80"/>
        <end position="391"/>
    </location>
</feature>
<feature type="topological domain" description="Cytoplasmic" evidence="2">
    <location>
        <begin position="1"/>
        <end position="19"/>
    </location>
</feature>
<feature type="transmembrane region" description="Helical; Signal-anchor for type II membrane protein" evidence="2">
    <location>
        <begin position="20"/>
        <end position="38"/>
    </location>
</feature>
<feature type="topological domain" description="Lumenal" evidence="2">
    <location>
        <begin position="39"/>
        <end position="391"/>
    </location>
</feature>
<feature type="domain" description="ShKT" evidence="3">
    <location>
        <begin position="256"/>
        <end position="290"/>
    </location>
</feature>
<feature type="domain" description="Ig-like C2-type">
    <location>
        <begin position="296"/>
        <end position="381"/>
    </location>
</feature>
<feature type="active site" evidence="4">
    <location>
        <position position="213"/>
    </location>
</feature>
<feature type="binding site" evidence="4">
    <location>
        <position position="212"/>
    </location>
    <ligand>
        <name>Zn(2+)</name>
        <dbReference type="ChEBI" id="CHEBI:29105"/>
        <note>catalytic</note>
    </ligand>
</feature>
<feature type="binding site" evidence="4">
    <location>
        <position position="216"/>
    </location>
    <ligand>
        <name>Zn(2+)</name>
        <dbReference type="ChEBI" id="CHEBI:29105"/>
        <note>catalytic</note>
    </ligand>
</feature>
<feature type="binding site" evidence="4">
    <location>
        <position position="222"/>
    </location>
    <ligand>
        <name>Zn(2+)</name>
        <dbReference type="ChEBI" id="CHEBI:29105"/>
        <note>catalytic</note>
    </ligand>
</feature>
<feature type="site" description="Cleavage; by furin-like protease" evidence="2">
    <location>
        <begin position="79"/>
        <end position="80"/>
    </location>
</feature>
<feature type="glycosylation site" description="N-linked (GlcNAc...) asparagine" evidence="2">
    <location>
        <position position="93"/>
    </location>
</feature>
<feature type="glycosylation site" description="N-linked (GlcNAc...) asparagine" evidence="2">
    <location>
        <position position="149"/>
    </location>
</feature>
<feature type="glycosylation site" description="N-linked (GlcNAc...) asparagine" evidence="2">
    <location>
        <position position="233"/>
    </location>
</feature>
<feature type="glycosylation site" description="N-linked (GlcNAc...) asparagine" evidence="2">
    <location>
        <position position="317"/>
    </location>
</feature>
<feature type="disulfide bond" evidence="6">
    <location>
        <begin position="256"/>
        <end position="290"/>
    </location>
</feature>
<feature type="disulfide bond" evidence="6">
    <location>
        <begin position="263"/>
        <end position="283"/>
    </location>
</feature>
<feature type="disulfide bond" evidence="6">
    <location>
        <begin position="272"/>
        <end position="287"/>
    </location>
</feature>
<feature type="disulfide bond" evidence="1">
    <location>
        <begin position="322"/>
        <end position="371"/>
    </location>
</feature>
<feature type="helix" evidence="8">
    <location>
        <begin position="263"/>
        <end position="267"/>
    </location>
</feature>
<feature type="turn" evidence="8">
    <location>
        <begin position="268"/>
        <end position="273"/>
    </location>
</feature>
<feature type="helix" evidence="8">
    <location>
        <begin position="276"/>
        <end position="282"/>
    </location>
</feature>
<feature type="turn" evidence="8">
    <location>
        <begin position="284"/>
        <end position="288"/>
    </location>
</feature>
<keyword id="KW-0002">3D-structure</keyword>
<keyword id="KW-0165">Cleavage on pair of basic residues</keyword>
<keyword id="KW-1015">Disulfide bond</keyword>
<keyword id="KW-0256">Endoplasmic reticulum</keyword>
<keyword id="KW-0325">Glycoprotein</keyword>
<keyword id="KW-0378">Hydrolase</keyword>
<keyword id="KW-0393">Immunoglobulin domain</keyword>
<keyword id="KW-0472">Membrane</keyword>
<keyword id="KW-0479">Metal-binding</keyword>
<keyword id="KW-0482">Metalloprotease</keyword>
<keyword id="KW-0645">Protease</keyword>
<keyword id="KW-1185">Reference proteome</keyword>
<keyword id="KW-0735">Signal-anchor</keyword>
<keyword id="KW-0812">Transmembrane</keyword>
<keyword id="KW-1133">Transmembrane helix</keyword>
<keyword id="KW-0862">Zinc</keyword>
<keyword id="KW-0865">Zymogen</keyword>
<accession>O88272</accession>
<organism>
    <name type="scientific">Rattus norvegicus</name>
    <name type="common">Rat</name>
    <dbReference type="NCBI Taxonomy" id="10116"/>
    <lineage>
        <taxon>Eukaryota</taxon>
        <taxon>Metazoa</taxon>
        <taxon>Chordata</taxon>
        <taxon>Craniata</taxon>
        <taxon>Vertebrata</taxon>
        <taxon>Euteleostomi</taxon>
        <taxon>Mammalia</taxon>
        <taxon>Eutheria</taxon>
        <taxon>Euarchontoglires</taxon>
        <taxon>Glires</taxon>
        <taxon>Rodentia</taxon>
        <taxon>Myomorpha</taxon>
        <taxon>Muroidea</taxon>
        <taxon>Muridae</taxon>
        <taxon>Murinae</taxon>
        <taxon>Rattus</taxon>
    </lineage>
</organism>
<dbReference type="EC" id="3.4.24.-"/>
<dbReference type="EMBL" id="AB010960">
    <property type="protein sequence ID" value="BAA24832.1"/>
    <property type="molecule type" value="mRNA"/>
</dbReference>
<dbReference type="EMBL" id="BC086586">
    <property type="protein sequence ID" value="AAH86586.1"/>
    <property type="molecule type" value="mRNA"/>
</dbReference>
<dbReference type="RefSeq" id="NP_446058.1">
    <property type="nucleotide sequence ID" value="NM_053606.2"/>
</dbReference>
<dbReference type="PDB" id="2K72">
    <property type="method" value="NMR"/>
    <property type="chains" value="A=254-290"/>
</dbReference>
<dbReference type="PDBsum" id="2K72"/>
<dbReference type="BMRB" id="O88272"/>
<dbReference type="SMR" id="O88272"/>
<dbReference type="BioGRID" id="250194">
    <property type="interactions" value="2"/>
</dbReference>
<dbReference type="FunCoup" id="O88272">
    <property type="interactions" value="236"/>
</dbReference>
<dbReference type="STRING" id="10116.ENSRNOP00000061528"/>
<dbReference type="MEROPS" id="M10.022"/>
<dbReference type="GlyCosmos" id="O88272">
    <property type="glycosylation" value="4 sites, No reported glycans"/>
</dbReference>
<dbReference type="GlyGen" id="O88272">
    <property type="glycosylation" value="4 sites"/>
</dbReference>
<dbReference type="PhosphoSitePlus" id="O88272"/>
<dbReference type="PaxDb" id="10116-ENSRNOP00000061528"/>
<dbReference type="Ensembl" id="ENSRNOT00000066880.4">
    <property type="protein sequence ID" value="ENSRNOP00000061528.2"/>
    <property type="gene ID" value="ENSRNOG00000017477.7"/>
</dbReference>
<dbReference type="GeneID" id="94339"/>
<dbReference type="KEGG" id="rno:94339"/>
<dbReference type="AGR" id="RGD:620201"/>
<dbReference type="CTD" id="26561"/>
<dbReference type="RGD" id="620201">
    <property type="gene designation" value="Mmp23"/>
</dbReference>
<dbReference type="eggNOG" id="KOG1565">
    <property type="taxonomic scope" value="Eukaryota"/>
</dbReference>
<dbReference type="GeneTree" id="ENSGT00940000161187"/>
<dbReference type="HOGENOM" id="CLU_015489_2_1_1"/>
<dbReference type="InParanoid" id="O88272"/>
<dbReference type="OMA" id="HLHHCFD"/>
<dbReference type="OrthoDB" id="65569at2759"/>
<dbReference type="PhylomeDB" id="O88272"/>
<dbReference type="EvolutionaryTrace" id="O88272"/>
<dbReference type="PRO" id="PR:O88272"/>
<dbReference type="Proteomes" id="UP000002494">
    <property type="component" value="Chromosome 5"/>
</dbReference>
<dbReference type="Bgee" id="ENSRNOG00000017477">
    <property type="expression patterns" value="Expressed in ovary and 19 other cell types or tissues"/>
</dbReference>
<dbReference type="GO" id="GO:0005789">
    <property type="term" value="C:endoplasmic reticulum membrane"/>
    <property type="evidence" value="ECO:0007669"/>
    <property type="project" value="UniProtKB-SubCell"/>
</dbReference>
<dbReference type="GO" id="GO:0031012">
    <property type="term" value="C:extracellular matrix"/>
    <property type="evidence" value="ECO:0007669"/>
    <property type="project" value="InterPro"/>
</dbReference>
<dbReference type="GO" id="GO:0005615">
    <property type="term" value="C:extracellular space"/>
    <property type="evidence" value="ECO:0000318"/>
    <property type="project" value="GO_Central"/>
</dbReference>
<dbReference type="GO" id="GO:0004222">
    <property type="term" value="F:metalloendopeptidase activity"/>
    <property type="evidence" value="ECO:0000250"/>
    <property type="project" value="UniProtKB"/>
</dbReference>
<dbReference type="GO" id="GO:0008270">
    <property type="term" value="F:zinc ion binding"/>
    <property type="evidence" value="ECO:0007669"/>
    <property type="project" value="InterPro"/>
</dbReference>
<dbReference type="GO" id="GO:0030574">
    <property type="term" value="P:collagen catabolic process"/>
    <property type="evidence" value="ECO:0000318"/>
    <property type="project" value="GO_Central"/>
</dbReference>
<dbReference type="GO" id="GO:0030198">
    <property type="term" value="P:extracellular matrix organization"/>
    <property type="evidence" value="ECO:0000318"/>
    <property type="project" value="GO_Central"/>
</dbReference>
<dbReference type="GO" id="GO:0006508">
    <property type="term" value="P:proteolysis"/>
    <property type="evidence" value="ECO:0007669"/>
    <property type="project" value="UniProtKB-KW"/>
</dbReference>
<dbReference type="CDD" id="cd00096">
    <property type="entry name" value="Ig"/>
    <property type="match status" value="1"/>
</dbReference>
<dbReference type="CDD" id="cd04278">
    <property type="entry name" value="ZnMc_MMP"/>
    <property type="match status" value="1"/>
</dbReference>
<dbReference type="FunFam" id="3.40.390.10:FF:000024">
    <property type="entry name" value="Matrix metallopeptidase 23B"/>
    <property type="match status" value="1"/>
</dbReference>
<dbReference type="FunFam" id="2.60.40.10:FF:000565">
    <property type="entry name" value="Matrix metalloproteinase-23"/>
    <property type="match status" value="1"/>
</dbReference>
<dbReference type="Gene3D" id="1.10.10.1940">
    <property type="match status" value="1"/>
</dbReference>
<dbReference type="Gene3D" id="3.40.390.10">
    <property type="entry name" value="Collagenase (Catalytic Domain)"/>
    <property type="match status" value="1"/>
</dbReference>
<dbReference type="Gene3D" id="2.60.40.10">
    <property type="entry name" value="Immunoglobulins"/>
    <property type="match status" value="1"/>
</dbReference>
<dbReference type="InterPro" id="IPR007110">
    <property type="entry name" value="Ig-like_dom"/>
</dbReference>
<dbReference type="InterPro" id="IPR036179">
    <property type="entry name" value="Ig-like_dom_sf"/>
</dbReference>
<dbReference type="InterPro" id="IPR013783">
    <property type="entry name" value="Ig-like_fold"/>
</dbReference>
<dbReference type="InterPro" id="IPR033739">
    <property type="entry name" value="M10A_MMP"/>
</dbReference>
<dbReference type="InterPro" id="IPR024079">
    <property type="entry name" value="MetalloPept_cat_dom_sf"/>
</dbReference>
<dbReference type="InterPro" id="IPR001818">
    <property type="entry name" value="Pept_M10_metallopeptidase"/>
</dbReference>
<dbReference type="InterPro" id="IPR021190">
    <property type="entry name" value="Pept_M10A"/>
</dbReference>
<dbReference type="InterPro" id="IPR006026">
    <property type="entry name" value="Peptidase_Metallo"/>
</dbReference>
<dbReference type="InterPro" id="IPR003582">
    <property type="entry name" value="ShKT_dom"/>
</dbReference>
<dbReference type="PANTHER" id="PTHR10201">
    <property type="entry name" value="MATRIX METALLOPROTEINASE"/>
    <property type="match status" value="1"/>
</dbReference>
<dbReference type="PANTHER" id="PTHR10201:SF7">
    <property type="entry name" value="MATRIX METALLOPROTEINASE-23"/>
    <property type="match status" value="1"/>
</dbReference>
<dbReference type="Pfam" id="PF00413">
    <property type="entry name" value="Peptidase_M10"/>
    <property type="match status" value="1"/>
</dbReference>
<dbReference type="Pfam" id="PF01549">
    <property type="entry name" value="ShK"/>
    <property type="match status" value="1"/>
</dbReference>
<dbReference type="PRINTS" id="PR00138">
    <property type="entry name" value="MATRIXIN"/>
</dbReference>
<dbReference type="SMART" id="SM00254">
    <property type="entry name" value="ShKT"/>
    <property type="match status" value="1"/>
</dbReference>
<dbReference type="SMART" id="SM00235">
    <property type="entry name" value="ZnMc"/>
    <property type="match status" value="1"/>
</dbReference>
<dbReference type="SUPFAM" id="SSF48726">
    <property type="entry name" value="Immunoglobulin"/>
    <property type="match status" value="1"/>
</dbReference>
<dbReference type="SUPFAM" id="SSF55486">
    <property type="entry name" value="Metalloproteases ('zincins'), catalytic domain"/>
    <property type="match status" value="1"/>
</dbReference>
<dbReference type="PROSITE" id="PS50835">
    <property type="entry name" value="IG_LIKE"/>
    <property type="match status" value="1"/>
</dbReference>
<dbReference type="PROSITE" id="PS51670">
    <property type="entry name" value="SHKT"/>
    <property type="match status" value="1"/>
</dbReference>
<dbReference type="PROSITE" id="PS00142">
    <property type="entry name" value="ZINC_PROTEASE"/>
    <property type="match status" value="1"/>
</dbReference>
<proteinExistence type="evidence at protein level"/>
<reference key="1">
    <citation type="journal article" date="2001" name="Mol. Endocrinol.">
        <title>Cloning and characterization of a rat ortholog of MMP-23 (matrix metalloproteinase-23), a unique type of membrane-anchored matrix metalloproteinase and conditioned switching of its expression during the ovarian follicular development.</title>
        <authorList>
            <person name="Ohnishi J."/>
            <person name="Ohnishi E."/>
            <person name="Jin M."/>
            <person name="Hirano W."/>
            <person name="Nakane D."/>
            <person name="Matsui H."/>
            <person name="Kimura A."/>
            <person name="Sawa H."/>
            <person name="Nakayama K."/>
            <person name="Shibuya H."/>
            <person name="Nagashima K."/>
            <person name="Takahashi T."/>
        </authorList>
    </citation>
    <scope>NUCLEOTIDE SEQUENCE [MRNA]</scope>
    <scope>TISSUE SPECIFICITY</scope>
    <scope>GLYCOSYLATION</scope>
    <scope>SUBCELLULAR LOCATION</scope>
    <source>
        <strain>Sprague-Dawley</strain>
        <tissue>Ovary</tissue>
    </source>
</reference>
<reference key="2">
    <citation type="journal article" date="2004" name="Genome Res.">
        <title>The status, quality, and expansion of the NIH full-length cDNA project: the Mammalian Gene Collection (MGC).</title>
        <authorList>
            <consortium name="The MGC Project Team"/>
        </authorList>
    </citation>
    <scope>NUCLEOTIDE SEQUENCE [LARGE SCALE MRNA]</scope>
    <source>
        <tissue>Ovary</tissue>
    </source>
</reference>
<reference key="3">
    <citation type="journal article" date="2010" name="J. Biol. Chem.">
        <title>Potassium channel modulation by a toxin domain in matrix metalloprotease 23.</title>
        <authorList>
            <person name="Rangaraju S."/>
            <person name="Khoo K.K."/>
            <person name="Feng Z.P."/>
            <person name="Crossley G."/>
            <person name="Nugent D."/>
            <person name="Khaytin I."/>
            <person name="Chi V."/>
            <person name="Pham C."/>
            <person name="Calabresi P."/>
            <person name="Pennington M.W."/>
            <person name="Norton R.S."/>
            <person name="Chandy K.G."/>
        </authorList>
    </citation>
    <scope>STRUCTURE BY NMR OF 254-290</scope>
    <scope>FUNCTION</scope>
    <scope>SUBCELLULAR LOCATION</scope>
    <scope>TOXIN-LIKE DOMAIN</scope>
    <scope>DISULFIDE BONDS</scope>
</reference>
<gene>
    <name type="primary">Mmp23</name>
    <name type="synonym">Mifr</name>
</gene>
<comment type="function">
    <text evidence="6">Protease. May regulate the surface expression of some potassium channels by retaining them in the endoplasmic reticulum.</text>
</comment>
<comment type="cofactor">
    <cofactor evidence="1">
        <name>Zn(2+)</name>
        <dbReference type="ChEBI" id="CHEBI:29105"/>
    </cofactor>
    <text evidence="1">Binds 1 zinc ion per subunit.</text>
</comment>
<comment type="activity regulation">
    <text evidence="1">Inhibited by TIMP2.</text>
</comment>
<comment type="subcellular location">
    <subcellularLocation>
        <location>Membrane</location>
        <topology>Single-pass type II membrane protein</topology>
    </subcellularLocation>
    <subcellularLocation>
        <location>Endoplasmic reticulum membrane</location>
        <topology>Single-pass type II membrane protein</topology>
    </subcellularLocation>
    <text evidence="1">A secreted form produced by proteolytic cleavage may also exist.</text>
</comment>
<comment type="tissue specificity">
    <text evidence="5">Expressed at the highest levels in ovary and uterus. In ovary expression is strictly confined to granulosa cells of preantral and small antral follicles. Detected also in testis and prostate.</text>
</comment>
<comment type="domain">
    <text>The ShKT domain associates with, and blocks several potassium channels in the nanomolar to low micromolar range. The relative affinity is Kv1.6 &gt; Kv1.3 &gt; Kv1.1 = Kv3.2 &gt; Kv1.4.</text>
</comment>
<comment type="PTM">
    <text evidence="5">N-glycosylated.</text>
</comment>
<comment type="PTM">
    <text evidence="1">Proteolytic cleavage might yield an active form.</text>
</comment>
<comment type="similarity">
    <text evidence="7">Belongs to the peptidase M10A family.</text>
</comment>